<name>FLUC_BURCH</name>
<proteinExistence type="inferred from homology"/>
<organism>
    <name type="scientific">Burkholderia cenocepacia (strain HI2424)</name>
    <dbReference type="NCBI Taxonomy" id="331272"/>
    <lineage>
        <taxon>Bacteria</taxon>
        <taxon>Pseudomonadati</taxon>
        <taxon>Pseudomonadota</taxon>
        <taxon>Betaproteobacteria</taxon>
        <taxon>Burkholderiales</taxon>
        <taxon>Burkholderiaceae</taxon>
        <taxon>Burkholderia</taxon>
        <taxon>Burkholderia cepacia complex</taxon>
    </lineage>
</organism>
<gene>
    <name evidence="1" type="primary">fluC</name>
    <name evidence="1" type="synonym">crcB</name>
    <name type="ordered locus">Bcen2424_0946</name>
</gene>
<accession>A0K5C2</accession>
<reference key="1">
    <citation type="submission" date="2006-08" db="EMBL/GenBank/DDBJ databases">
        <title>Complete sequence of chromosome 1 of Burkholderia cenocepacia HI2424.</title>
        <authorList>
            <person name="Copeland A."/>
            <person name="Lucas S."/>
            <person name="Lapidus A."/>
            <person name="Barry K."/>
            <person name="Detter J.C."/>
            <person name="Glavina del Rio T."/>
            <person name="Hammon N."/>
            <person name="Israni S."/>
            <person name="Pitluck S."/>
            <person name="Chain P."/>
            <person name="Malfatti S."/>
            <person name="Shin M."/>
            <person name="Vergez L."/>
            <person name="Schmutz J."/>
            <person name="Larimer F."/>
            <person name="Land M."/>
            <person name="Hauser L."/>
            <person name="Kyrpides N."/>
            <person name="Kim E."/>
            <person name="LiPuma J.J."/>
            <person name="Gonzalez C.F."/>
            <person name="Konstantinidis K."/>
            <person name="Tiedje J.M."/>
            <person name="Richardson P."/>
        </authorList>
    </citation>
    <scope>NUCLEOTIDE SEQUENCE [LARGE SCALE GENOMIC DNA]</scope>
    <source>
        <strain>HI2424</strain>
    </source>
</reference>
<dbReference type="EMBL" id="CP000458">
    <property type="protein sequence ID" value="ABK07699.1"/>
    <property type="molecule type" value="Genomic_DNA"/>
</dbReference>
<dbReference type="RefSeq" id="WP_011544810.1">
    <property type="nucleotide sequence ID" value="NC_008542.1"/>
</dbReference>
<dbReference type="SMR" id="A0K5C2"/>
<dbReference type="KEGG" id="bch:Bcen2424_0946"/>
<dbReference type="HOGENOM" id="CLU_114342_3_3_4"/>
<dbReference type="GO" id="GO:0005886">
    <property type="term" value="C:plasma membrane"/>
    <property type="evidence" value="ECO:0007669"/>
    <property type="project" value="UniProtKB-SubCell"/>
</dbReference>
<dbReference type="GO" id="GO:0062054">
    <property type="term" value="F:fluoride channel activity"/>
    <property type="evidence" value="ECO:0007669"/>
    <property type="project" value="UniProtKB-UniRule"/>
</dbReference>
<dbReference type="GO" id="GO:0046872">
    <property type="term" value="F:metal ion binding"/>
    <property type="evidence" value="ECO:0007669"/>
    <property type="project" value="UniProtKB-KW"/>
</dbReference>
<dbReference type="GO" id="GO:0140114">
    <property type="term" value="P:cellular detoxification of fluoride"/>
    <property type="evidence" value="ECO:0007669"/>
    <property type="project" value="UniProtKB-UniRule"/>
</dbReference>
<dbReference type="HAMAP" id="MF_00454">
    <property type="entry name" value="FluC"/>
    <property type="match status" value="1"/>
</dbReference>
<dbReference type="InterPro" id="IPR003691">
    <property type="entry name" value="FluC"/>
</dbReference>
<dbReference type="NCBIfam" id="TIGR00494">
    <property type="entry name" value="crcB"/>
    <property type="match status" value="1"/>
</dbReference>
<dbReference type="NCBIfam" id="NF010792">
    <property type="entry name" value="PRK14196.1"/>
    <property type="match status" value="1"/>
</dbReference>
<dbReference type="PANTHER" id="PTHR28259">
    <property type="entry name" value="FLUORIDE EXPORT PROTEIN 1-RELATED"/>
    <property type="match status" value="1"/>
</dbReference>
<dbReference type="PANTHER" id="PTHR28259:SF1">
    <property type="entry name" value="FLUORIDE EXPORT PROTEIN 1-RELATED"/>
    <property type="match status" value="1"/>
</dbReference>
<dbReference type="Pfam" id="PF02537">
    <property type="entry name" value="CRCB"/>
    <property type="match status" value="1"/>
</dbReference>
<comment type="function">
    <text evidence="1">Fluoride-specific ion channel. Important for reducing fluoride concentration in the cell, thus reducing its toxicity.</text>
</comment>
<comment type="catalytic activity">
    <reaction evidence="1">
        <text>fluoride(in) = fluoride(out)</text>
        <dbReference type="Rhea" id="RHEA:76159"/>
        <dbReference type="ChEBI" id="CHEBI:17051"/>
    </reaction>
    <physiologicalReaction direction="left-to-right" evidence="1">
        <dbReference type="Rhea" id="RHEA:76160"/>
    </physiologicalReaction>
</comment>
<comment type="activity regulation">
    <text evidence="1">Na(+) is not transported, but it plays an essential structural role and its presence is essential for fluoride channel function.</text>
</comment>
<comment type="subcellular location">
    <subcellularLocation>
        <location evidence="1">Cell inner membrane</location>
        <topology evidence="1">Multi-pass membrane protein</topology>
    </subcellularLocation>
</comment>
<comment type="similarity">
    <text evidence="1">Belongs to the fluoride channel Fluc/FEX (TC 1.A.43) family.</text>
</comment>
<protein>
    <recommendedName>
        <fullName evidence="1">Fluoride-specific ion channel FluC</fullName>
    </recommendedName>
</protein>
<keyword id="KW-0997">Cell inner membrane</keyword>
<keyword id="KW-1003">Cell membrane</keyword>
<keyword id="KW-0407">Ion channel</keyword>
<keyword id="KW-0406">Ion transport</keyword>
<keyword id="KW-0472">Membrane</keyword>
<keyword id="KW-0479">Metal-binding</keyword>
<keyword id="KW-0915">Sodium</keyword>
<keyword id="KW-0812">Transmembrane</keyword>
<keyword id="KW-1133">Transmembrane helix</keyword>
<keyword id="KW-0813">Transport</keyword>
<feature type="chain" id="PRO_1000026370" description="Fluoride-specific ion channel FluC">
    <location>
        <begin position="1"/>
        <end position="128"/>
    </location>
</feature>
<feature type="transmembrane region" description="Helical" evidence="1">
    <location>
        <begin position="5"/>
        <end position="25"/>
    </location>
</feature>
<feature type="transmembrane region" description="Helical" evidence="1">
    <location>
        <begin position="35"/>
        <end position="55"/>
    </location>
</feature>
<feature type="transmembrane region" description="Helical" evidence="1">
    <location>
        <begin position="67"/>
        <end position="87"/>
    </location>
</feature>
<feature type="transmembrane region" description="Helical" evidence="1">
    <location>
        <begin position="96"/>
        <end position="116"/>
    </location>
</feature>
<feature type="binding site" evidence="1">
    <location>
        <position position="75"/>
    </location>
    <ligand>
        <name>Na(+)</name>
        <dbReference type="ChEBI" id="CHEBI:29101"/>
        <note>structural</note>
    </ligand>
</feature>
<feature type="binding site" evidence="1">
    <location>
        <position position="78"/>
    </location>
    <ligand>
        <name>Na(+)</name>
        <dbReference type="ChEBI" id="CHEBI:29101"/>
        <note>structural</note>
    </ligand>
</feature>
<sequence>MFYSIVAIFVGAGLGALLRWFLSLALNAFFPAVPLGTLASNLIGGYVIGVAAVVFTVRVGLPPEWRLFVITGFLGGLTTFSTYSVEVMTHALEGEFGWALAVAALHLTGSFALTALGMWTARAWLAAA</sequence>
<evidence type="ECO:0000255" key="1">
    <source>
        <dbReference type="HAMAP-Rule" id="MF_00454"/>
    </source>
</evidence>